<dbReference type="EC" id="3.4.21.92" evidence="1"/>
<dbReference type="EMBL" id="CP001011">
    <property type="protein sequence ID" value="ACB91914.1"/>
    <property type="molecule type" value="Genomic_DNA"/>
</dbReference>
<dbReference type="RefSeq" id="WP_011097655.1">
    <property type="nucleotide sequence ID" value="NC_010577.1"/>
</dbReference>
<dbReference type="SMR" id="B2I8K3"/>
<dbReference type="MEROPS" id="S14.001"/>
<dbReference type="GeneID" id="93904175"/>
<dbReference type="KEGG" id="xfn:XfasM23_0467"/>
<dbReference type="HOGENOM" id="CLU_058707_3_3_6"/>
<dbReference type="Proteomes" id="UP000001698">
    <property type="component" value="Chromosome"/>
</dbReference>
<dbReference type="GO" id="GO:0005737">
    <property type="term" value="C:cytoplasm"/>
    <property type="evidence" value="ECO:0007669"/>
    <property type="project" value="UniProtKB-SubCell"/>
</dbReference>
<dbReference type="GO" id="GO:0009368">
    <property type="term" value="C:endopeptidase Clp complex"/>
    <property type="evidence" value="ECO:0007669"/>
    <property type="project" value="TreeGrafter"/>
</dbReference>
<dbReference type="GO" id="GO:0004176">
    <property type="term" value="F:ATP-dependent peptidase activity"/>
    <property type="evidence" value="ECO:0007669"/>
    <property type="project" value="InterPro"/>
</dbReference>
<dbReference type="GO" id="GO:0051117">
    <property type="term" value="F:ATPase binding"/>
    <property type="evidence" value="ECO:0007669"/>
    <property type="project" value="TreeGrafter"/>
</dbReference>
<dbReference type="GO" id="GO:0004252">
    <property type="term" value="F:serine-type endopeptidase activity"/>
    <property type="evidence" value="ECO:0007669"/>
    <property type="project" value="UniProtKB-UniRule"/>
</dbReference>
<dbReference type="GO" id="GO:0006515">
    <property type="term" value="P:protein quality control for misfolded or incompletely synthesized proteins"/>
    <property type="evidence" value="ECO:0007669"/>
    <property type="project" value="TreeGrafter"/>
</dbReference>
<dbReference type="CDD" id="cd07017">
    <property type="entry name" value="S14_ClpP_2"/>
    <property type="match status" value="1"/>
</dbReference>
<dbReference type="FunFam" id="3.90.226.10:FF:000001">
    <property type="entry name" value="ATP-dependent Clp protease proteolytic subunit"/>
    <property type="match status" value="1"/>
</dbReference>
<dbReference type="Gene3D" id="3.90.226.10">
    <property type="entry name" value="2-enoyl-CoA Hydratase, Chain A, domain 1"/>
    <property type="match status" value="1"/>
</dbReference>
<dbReference type="HAMAP" id="MF_00444">
    <property type="entry name" value="ClpP"/>
    <property type="match status" value="1"/>
</dbReference>
<dbReference type="InterPro" id="IPR001907">
    <property type="entry name" value="ClpP"/>
</dbReference>
<dbReference type="InterPro" id="IPR029045">
    <property type="entry name" value="ClpP/crotonase-like_dom_sf"/>
</dbReference>
<dbReference type="InterPro" id="IPR023562">
    <property type="entry name" value="ClpP/TepA"/>
</dbReference>
<dbReference type="InterPro" id="IPR033135">
    <property type="entry name" value="ClpP_His_AS"/>
</dbReference>
<dbReference type="InterPro" id="IPR018215">
    <property type="entry name" value="ClpP_Ser_AS"/>
</dbReference>
<dbReference type="NCBIfam" id="TIGR00493">
    <property type="entry name" value="clpP"/>
    <property type="match status" value="1"/>
</dbReference>
<dbReference type="NCBIfam" id="NF001368">
    <property type="entry name" value="PRK00277.1"/>
    <property type="match status" value="1"/>
</dbReference>
<dbReference type="NCBIfam" id="NF009205">
    <property type="entry name" value="PRK12553.1"/>
    <property type="match status" value="1"/>
</dbReference>
<dbReference type="PANTHER" id="PTHR10381">
    <property type="entry name" value="ATP-DEPENDENT CLP PROTEASE PROTEOLYTIC SUBUNIT"/>
    <property type="match status" value="1"/>
</dbReference>
<dbReference type="PANTHER" id="PTHR10381:SF70">
    <property type="entry name" value="ATP-DEPENDENT CLP PROTEASE PROTEOLYTIC SUBUNIT"/>
    <property type="match status" value="1"/>
</dbReference>
<dbReference type="Pfam" id="PF00574">
    <property type="entry name" value="CLP_protease"/>
    <property type="match status" value="1"/>
</dbReference>
<dbReference type="PRINTS" id="PR00127">
    <property type="entry name" value="CLPPROTEASEP"/>
</dbReference>
<dbReference type="SUPFAM" id="SSF52096">
    <property type="entry name" value="ClpP/crotonase"/>
    <property type="match status" value="1"/>
</dbReference>
<dbReference type="PROSITE" id="PS00382">
    <property type="entry name" value="CLP_PROTEASE_HIS"/>
    <property type="match status" value="1"/>
</dbReference>
<dbReference type="PROSITE" id="PS00381">
    <property type="entry name" value="CLP_PROTEASE_SER"/>
    <property type="match status" value="1"/>
</dbReference>
<proteinExistence type="inferred from homology"/>
<accession>B2I8K3</accession>
<feature type="chain" id="PRO_1000124728" description="ATP-dependent Clp protease proteolytic subunit">
    <location>
        <begin position="1"/>
        <end position="208"/>
    </location>
</feature>
<feature type="active site" description="Nucleophile" evidence="1">
    <location>
        <position position="105"/>
    </location>
</feature>
<feature type="active site" evidence="1">
    <location>
        <position position="130"/>
    </location>
</feature>
<keyword id="KW-0963">Cytoplasm</keyword>
<keyword id="KW-0378">Hydrolase</keyword>
<keyword id="KW-0645">Protease</keyword>
<keyword id="KW-0720">Serine protease</keyword>
<sequence>MDDVTKALNLVPMVVEQTSRGERAYDIYSRLLKERLIFLVGPIDDYMANLIVAQLLFLEAENPEKDINIYINSPGGVVTAGMAIYDTMQYIKPAVSTICVGQAASMGALLLASGASGKRYALPNSRVMIHQPLGGFQGQATDIDIHAREILALRARLNEILAKHTGQSLETIAHDTERDNFKSAVDAQAYGLVDQVFGQRQEELIQSS</sequence>
<protein>
    <recommendedName>
        <fullName evidence="1">ATP-dependent Clp protease proteolytic subunit</fullName>
        <ecNumber evidence="1">3.4.21.92</ecNumber>
    </recommendedName>
    <alternativeName>
        <fullName evidence="1">Endopeptidase Clp</fullName>
    </alternativeName>
</protein>
<reference key="1">
    <citation type="journal article" date="2010" name="J. Bacteriol.">
        <title>Whole genome sequences of two Xylella fastidiosa strains (M12 and M23) causing almond leaf scorch disease in California.</title>
        <authorList>
            <person name="Chen J."/>
            <person name="Xie G."/>
            <person name="Han S."/>
            <person name="Chertkov O."/>
            <person name="Sims D."/>
            <person name="Civerolo E.L."/>
        </authorList>
    </citation>
    <scope>NUCLEOTIDE SEQUENCE [LARGE SCALE GENOMIC DNA]</scope>
    <source>
        <strain>M23</strain>
    </source>
</reference>
<comment type="function">
    <text evidence="1">Cleaves peptides in various proteins in a process that requires ATP hydrolysis. Has a chymotrypsin-like activity. Plays a major role in the degradation of misfolded proteins.</text>
</comment>
<comment type="catalytic activity">
    <reaction evidence="1">
        <text>Hydrolysis of proteins to small peptides in the presence of ATP and magnesium. alpha-casein is the usual test substrate. In the absence of ATP, only oligopeptides shorter than five residues are hydrolyzed (such as succinyl-Leu-Tyr-|-NHMec, and Leu-Tyr-Leu-|-Tyr-Trp, in which cleavage of the -Tyr-|-Leu- and -Tyr-|-Trp bonds also occurs).</text>
        <dbReference type="EC" id="3.4.21.92"/>
    </reaction>
</comment>
<comment type="subunit">
    <text evidence="1">Fourteen ClpP subunits assemble into 2 heptameric rings which stack back to back to give a disk-like structure with a central cavity, resembling the structure of eukaryotic proteasomes.</text>
</comment>
<comment type="subcellular location">
    <subcellularLocation>
        <location evidence="1">Cytoplasm</location>
    </subcellularLocation>
</comment>
<comment type="similarity">
    <text evidence="1">Belongs to the peptidase S14 family.</text>
</comment>
<organism>
    <name type="scientific">Xylella fastidiosa (strain M23)</name>
    <dbReference type="NCBI Taxonomy" id="405441"/>
    <lineage>
        <taxon>Bacteria</taxon>
        <taxon>Pseudomonadati</taxon>
        <taxon>Pseudomonadota</taxon>
        <taxon>Gammaproteobacteria</taxon>
        <taxon>Lysobacterales</taxon>
        <taxon>Lysobacteraceae</taxon>
        <taxon>Xylella</taxon>
    </lineage>
</organism>
<evidence type="ECO:0000255" key="1">
    <source>
        <dbReference type="HAMAP-Rule" id="MF_00444"/>
    </source>
</evidence>
<gene>
    <name evidence="1" type="primary">clpP</name>
    <name type="ordered locus">XfasM23_0467</name>
</gene>
<name>CLPP_XYLF2</name>